<protein>
    <recommendedName>
        <fullName evidence="1">Putative membrane protein insertion efficiency factor</fullName>
    </recommendedName>
</protein>
<comment type="function">
    <text evidence="1">Could be involved in insertion of integral membrane proteins into the membrane.</text>
</comment>
<comment type="subcellular location">
    <subcellularLocation>
        <location evidence="1">Cell inner membrane</location>
        <topology evidence="1">Peripheral membrane protein</topology>
        <orientation evidence="1">Cytoplasmic side</orientation>
    </subcellularLocation>
</comment>
<comment type="similarity">
    <text evidence="1">Belongs to the UPF0161 family.</text>
</comment>
<feature type="chain" id="PRO_1000197775" description="Putative membrane protein insertion efficiency factor">
    <location>
        <begin position="1"/>
        <end position="129"/>
    </location>
</feature>
<organism>
    <name type="scientific">Rhodopseudomonas palustris (strain TIE-1)</name>
    <dbReference type="NCBI Taxonomy" id="395960"/>
    <lineage>
        <taxon>Bacteria</taxon>
        <taxon>Pseudomonadati</taxon>
        <taxon>Pseudomonadota</taxon>
        <taxon>Alphaproteobacteria</taxon>
        <taxon>Hyphomicrobiales</taxon>
        <taxon>Nitrobacteraceae</taxon>
        <taxon>Rhodopseudomonas</taxon>
    </lineage>
</organism>
<keyword id="KW-0997">Cell inner membrane</keyword>
<keyword id="KW-1003">Cell membrane</keyword>
<keyword id="KW-0472">Membrane</keyword>
<reference key="1">
    <citation type="submission" date="2008-05" db="EMBL/GenBank/DDBJ databases">
        <title>Complete sequence of Rhodopseudomonas palustris TIE-1.</title>
        <authorList>
            <consortium name="US DOE Joint Genome Institute"/>
            <person name="Lucas S."/>
            <person name="Copeland A."/>
            <person name="Lapidus A."/>
            <person name="Glavina del Rio T."/>
            <person name="Dalin E."/>
            <person name="Tice H."/>
            <person name="Pitluck S."/>
            <person name="Chain P."/>
            <person name="Malfatti S."/>
            <person name="Shin M."/>
            <person name="Vergez L."/>
            <person name="Lang D."/>
            <person name="Schmutz J."/>
            <person name="Larimer F."/>
            <person name="Land M."/>
            <person name="Hauser L."/>
            <person name="Kyrpides N."/>
            <person name="Mikhailova N."/>
            <person name="Emerson D."/>
            <person name="Newman D.K."/>
            <person name="Roden E."/>
            <person name="Richardson P."/>
        </authorList>
    </citation>
    <scope>NUCLEOTIDE SEQUENCE [LARGE SCALE GENOMIC DNA]</scope>
    <source>
        <strain>TIE-1</strain>
    </source>
</reference>
<gene>
    <name type="ordered locus">Rpal_3875</name>
</gene>
<evidence type="ECO:0000255" key="1">
    <source>
        <dbReference type="HAMAP-Rule" id="MF_00386"/>
    </source>
</evidence>
<sequence length="129" mass="14642">MQLPSRGTDWIAPVLRLPRNAGRGLIWLYRHTLSPLVGYNCRHYPTCSMYGDEAIRKFGLWAGGWMTLARLLRCQPWGTSGIDLVPQTAPSRARWYLPWRYARWRGVNAPPPDVAEPCGCGSHSQLTPH</sequence>
<proteinExistence type="inferred from homology"/>
<dbReference type="EMBL" id="CP001096">
    <property type="protein sequence ID" value="ACF02373.1"/>
    <property type="molecule type" value="Genomic_DNA"/>
</dbReference>
<dbReference type="RefSeq" id="WP_012496821.1">
    <property type="nucleotide sequence ID" value="NC_011004.1"/>
</dbReference>
<dbReference type="SMR" id="B3QE28"/>
<dbReference type="KEGG" id="rpt:Rpal_3875"/>
<dbReference type="HOGENOM" id="CLU_144811_0_0_5"/>
<dbReference type="OrthoDB" id="9801753at2"/>
<dbReference type="Proteomes" id="UP000001725">
    <property type="component" value="Chromosome"/>
</dbReference>
<dbReference type="GO" id="GO:0005886">
    <property type="term" value="C:plasma membrane"/>
    <property type="evidence" value="ECO:0007669"/>
    <property type="project" value="UniProtKB-SubCell"/>
</dbReference>
<dbReference type="HAMAP" id="MF_00386">
    <property type="entry name" value="UPF0161_YidD"/>
    <property type="match status" value="1"/>
</dbReference>
<dbReference type="InterPro" id="IPR002696">
    <property type="entry name" value="Membr_insert_effic_factor_YidD"/>
</dbReference>
<dbReference type="NCBIfam" id="TIGR00278">
    <property type="entry name" value="membrane protein insertion efficiency factor YidD"/>
    <property type="match status" value="1"/>
</dbReference>
<dbReference type="PANTHER" id="PTHR33383">
    <property type="entry name" value="MEMBRANE PROTEIN INSERTION EFFICIENCY FACTOR-RELATED"/>
    <property type="match status" value="1"/>
</dbReference>
<dbReference type="PANTHER" id="PTHR33383:SF1">
    <property type="entry name" value="MEMBRANE PROTEIN INSERTION EFFICIENCY FACTOR-RELATED"/>
    <property type="match status" value="1"/>
</dbReference>
<dbReference type="Pfam" id="PF01809">
    <property type="entry name" value="YidD"/>
    <property type="match status" value="1"/>
</dbReference>
<dbReference type="SMART" id="SM01234">
    <property type="entry name" value="Haemolytic"/>
    <property type="match status" value="1"/>
</dbReference>
<accession>B3QE28</accession>
<name>YIDD_RHOPT</name>